<reference key="1">
    <citation type="submission" date="2007-02" db="EMBL/GenBank/DDBJ databases">
        <title>Complete sequence of Pyrobaculum calidifontis JCM 11548.</title>
        <authorList>
            <consortium name="US DOE Joint Genome Institute"/>
            <person name="Copeland A."/>
            <person name="Lucas S."/>
            <person name="Lapidus A."/>
            <person name="Barry K."/>
            <person name="Glavina del Rio T."/>
            <person name="Dalin E."/>
            <person name="Tice H."/>
            <person name="Pitluck S."/>
            <person name="Chain P."/>
            <person name="Malfatti S."/>
            <person name="Shin M."/>
            <person name="Vergez L."/>
            <person name="Schmutz J."/>
            <person name="Larimer F."/>
            <person name="Land M."/>
            <person name="Hauser L."/>
            <person name="Kyrpides N."/>
            <person name="Mikhailova N."/>
            <person name="Cozen A.E."/>
            <person name="Fitz-Gibbon S.T."/>
            <person name="House C.H."/>
            <person name="Saltikov C."/>
            <person name="Lowe T.M."/>
            <person name="Richardson P."/>
        </authorList>
    </citation>
    <scope>NUCLEOTIDE SEQUENCE [LARGE SCALE GENOMIC DNA]</scope>
    <source>
        <strain>DSM 21063 / JCM 11548 / VA1</strain>
    </source>
</reference>
<proteinExistence type="inferred from homology"/>
<dbReference type="EC" id="4.2.1.33" evidence="1"/>
<dbReference type="EMBL" id="CP000561">
    <property type="protein sequence ID" value="ABO09011.1"/>
    <property type="molecule type" value="Genomic_DNA"/>
</dbReference>
<dbReference type="RefSeq" id="WP_011850269.1">
    <property type="nucleotide sequence ID" value="NC_009073.1"/>
</dbReference>
<dbReference type="SMR" id="A3MWJ4"/>
<dbReference type="STRING" id="410359.Pcal_1593"/>
<dbReference type="GeneID" id="4908470"/>
<dbReference type="KEGG" id="pcl:Pcal_1593"/>
<dbReference type="eggNOG" id="arCOG01698">
    <property type="taxonomic scope" value="Archaea"/>
</dbReference>
<dbReference type="HOGENOM" id="CLU_006714_3_4_2"/>
<dbReference type="OrthoDB" id="255at2157"/>
<dbReference type="UniPathway" id="UPA00048">
    <property type="reaction ID" value="UER00071"/>
</dbReference>
<dbReference type="Proteomes" id="UP000001431">
    <property type="component" value="Chromosome"/>
</dbReference>
<dbReference type="GO" id="GO:0003861">
    <property type="term" value="F:3-isopropylmalate dehydratase activity"/>
    <property type="evidence" value="ECO:0007669"/>
    <property type="project" value="UniProtKB-UniRule"/>
</dbReference>
<dbReference type="GO" id="GO:0051539">
    <property type="term" value="F:4 iron, 4 sulfur cluster binding"/>
    <property type="evidence" value="ECO:0007669"/>
    <property type="project" value="UniProtKB-KW"/>
</dbReference>
<dbReference type="GO" id="GO:0046872">
    <property type="term" value="F:metal ion binding"/>
    <property type="evidence" value="ECO:0007669"/>
    <property type="project" value="UniProtKB-KW"/>
</dbReference>
<dbReference type="GO" id="GO:0009098">
    <property type="term" value="P:L-leucine biosynthetic process"/>
    <property type="evidence" value="ECO:0007669"/>
    <property type="project" value="UniProtKB-UniRule"/>
</dbReference>
<dbReference type="Gene3D" id="3.30.499.10">
    <property type="entry name" value="Aconitase, domain 3"/>
    <property type="match status" value="2"/>
</dbReference>
<dbReference type="HAMAP" id="MF_01027">
    <property type="entry name" value="LeuC_type2"/>
    <property type="match status" value="1"/>
</dbReference>
<dbReference type="InterPro" id="IPR015931">
    <property type="entry name" value="Acnase/IPM_dHydase_lsu_aba_1/3"/>
</dbReference>
<dbReference type="InterPro" id="IPR001030">
    <property type="entry name" value="Acoase/IPM_deHydtase_lsu_aba"/>
</dbReference>
<dbReference type="InterPro" id="IPR018136">
    <property type="entry name" value="Aconitase_4Fe-4S_BS"/>
</dbReference>
<dbReference type="InterPro" id="IPR036008">
    <property type="entry name" value="Aconitase_4Fe-4S_dom"/>
</dbReference>
<dbReference type="InterPro" id="IPR011826">
    <property type="entry name" value="HAcnase/IPMdehydase_lsu_prok"/>
</dbReference>
<dbReference type="InterPro" id="IPR006251">
    <property type="entry name" value="Homoacnase/IPMdehydase_lsu"/>
</dbReference>
<dbReference type="InterPro" id="IPR050067">
    <property type="entry name" value="IPM_dehydratase_rel_enz"/>
</dbReference>
<dbReference type="NCBIfam" id="TIGR01343">
    <property type="entry name" value="hacA_fam"/>
    <property type="match status" value="1"/>
</dbReference>
<dbReference type="NCBIfam" id="TIGR02086">
    <property type="entry name" value="IPMI_arch"/>
    <property type="match status" value="1"/>
</dbReference>
<dbReference type="NCBIfam" id="NF001614">
    <property type="entry name" value="PRK00402.1"/>
    <property type="match status" value="1"/>
</dbReference>
<dbReference type="PANTHER" id="PTHR43822:SF2">
    <property type="entry name" value="HOMOACONITASE, MITOCHONDRIAL"/>
    <property type="match status" value="1"/>
</dbReference>
<dbReference type="PANTHER" id="PTHR43822">
    <property type="entry name" value="HOMOACONITASE, MITOCHONDRIAL-RELATED"/>
    <property type="match status" value="1"/>
</dbReference>
<dbReference type="Pfam" id="PF00330">
    <property type="entry name" value="Aconitase"/>
    <property type="match status" value="2"/>
</dbReference>
<dbReference type="PRINTS" id="PR00415">
    <property type="entry name" value="ACONITASE"/>
</dbReference>
<dbReference type="SUPFAM" id="SSF53732">
    <property type="entry name" value="Aconitase iron-sulfur domain"/>
    <property type="match status" value="1"/>
</dbReference>
<dbReference type="PROSITE" id="PS00450">
    <property type="entry name" value="ACONITASE_1"/>
    <property type="match status" value="1"/>
</dbReference>
<dbReference type="PROSITE" id="PS01244">
    <property type="entry name" value="ACONITASE_2"/>
    <property type="match status" value="1"/>
</dbReference>
<organism>
    <name type="scientific">Pyrobaculum calidifontis (strain DSM 21063 / JCM 11548 / VA1)</name>
    <dbReference type="NCBI Taxonomy" id="410359"/>
    <lineage>
        <taxon>Archaea</taxon>
        <taxon>Thermoproteota</taxon>
        <taxon>Thermoprotei</taxon>
        <taxon>Thermoproteales</taxon>
        <taxon>Thermoproteaceae</taxon>
        <taxon>Pyrobaculum</taxon>
    </lineage>
</organism>
<sequence>MPTWTEYIFYKKLGKAPSPGDVVEVVPDLVGFHDLTGYHVLEVLEQMGKVEVFDRGRVVVAFDHLAPPPTQRAAELQVYIRRHVKALGLPHFYDVGGGILHQIILEKYAMPEQVIFAADSHTNTAGAVGAFAQGLGATDIAAALKLGKTWLVVPTPFAVRVVGEFPKGVMGKDVALHLLGAFGAEGFNGYSVEVTVEKPKAFPMDDRATVANMSTEMGADALVFIPDEVTVAYLHEARGVSYKPPALGGGKYADEYTVELGRLEPLVAAPHSVDNVKAVAEVEGIEVDQVFIGSCTNGRLSDIEVAAKILRHGRVKARCIAIPASYDVFRRAMELGYVDVLTKAGCVVTYGTCGPCLGGHFGVAGPGEVVLTTSNRNFKGRVGHPDSKVYLANPAVAAATALTGRITDPRQYL</sequence>
<name>LEUC_PYRCJ</name>
<feature type="chain" id="PRO_1000063653" description="3-isopropylmalate dehydratase large subunit">
    <location>
        <begin position="1"/>
        <end position="413"/>
    </location>
</feature>
<feature type="binding site" evidence="1">
    <location>
        <position position="295"/>
    </location>
    <ligand>
        <name>[4Fe-4S] cluster</name>
        <dbReference type="ChEBI" id="CHEBI:49883"/>
    </ligand>
</feature>
<feature type="binding site" evidence="1">
    <location>
        <position position="353"/>
    </location>
    <ligand>
        <name>[4Fe-4S] cluster</name>
        <dbReference type="ChEBI" id="CHEBI:49883"/>
    </ligand>
</feature>
<feature type="binding site" evidence="1">
    <location>
        <position position="356"/>
    </location>
    <ligand>
        <name>[4Fe-4S] cluster</name>
        <dbReference type="ChEBI" id="CHEBI:49883"/>
    </ligand>
</feature>
<evidence type="ECO:0000255" key="1">
    <source>
        <dbReference type="HAMAP-Rule" id="MF_01027"/>
    </source>
</evidence>
<protein>
    <recommendedName>
        <fullName evidence="1">3-isopropylmalate dehydratase large subunit</fullName>
        <ecNumber evidence="1">4.2.1.33</ecNumber>
    </recommendedName>
    <alternativeName>
        <fullName evidence="1">Alpha-IPM isomerase</fullName>
        <shortName evidence="1">IPMI</shortName>
    </alternativeName>
    <alternativeName>
        <fullName evidence="1">Isopropylmalate isomerase</fullName>
    </alternativeName>
</protein>
<keyword id="KW-0004">4Fe-4S</keyword>
<keyword id="KW-0028">Amino-acid biosynthesis</keyword>
<keyword id="KW-0100">Branched-chain amino acid biosynthesis</keyword>
<keyword id="KW-0408">Iron</keyword>
<keyword id="KW-0411">Iron-sulfur</keyword>
<keyword id="KW-0432">Leucine biosynthesis</keyword>
<keyword id="KW-0456">Lyase</keyword>
<keyword id="KW-0479">Metal-binding</keyword>
<gene>
    <name evidence="1" type="primary">leuC</name>
    <name type="ordered locus">Pcal_1593</name>
</gene>
<accession>A3MWJ4</accession>
<comment type="function">
    <text evidence="1">Catalyzes the isomerization between 2-isopropylmalate and 3-isopropylmalate, via the formation of 2-isopropylmaleate.</text>
</comment>
<comment type="catalytic activity">
    <reaction evidence="1">
        <text>(2R,3S)-3-isopropylmalate = (2S)-2-isopropylmalate</text>
        <dbReference type="Rhea" id="RHEA:32287"/>
        <dbReference type="ChEBI" id="CHEBI:1178"/>
        <dbReference type="ChEBI" id="CHEBI:35121"/>
        <dbReference type="EC" id="4.2.1.33"/>
    </reaction>
</comment>
<comment type="cofactor">
    <cofactor evidence="1">
        <name>[4Fe-4S] cluster</name>
        <dbReference type="ChEBI" id="CHEBI:49883"/>
    </cofactor>
    <text evidence="1">Binds 1 [4Fe-4S] cluster per subunit.</text>
</comment>
<comment type="pathway">
    <text evidence="1">Amino-acid biosynthesis; L-leucine biosynthesis; L-leucine from 3-methyl-2-oxobutanoate: step 2/4.</text>
</comment>
<comment type="subunit">
    <text evidence="1">Heterodimer of LeuC and LeuD.</text>
</comment>
<comment type="similarity">
    <text evidence="1">Belongs to the aconitase/IPM isomerase family. LeuC type 2 subfamily.</text>
</comment>